<name>AVL9_MOUSE</name>
<sequence>MEKSGRESDGAPCGPVLHIVVVGFHHKKGCQVEFSYPPLIPGDGHDSHTLPEEWKYLPFLALPDGAHNYQEDTVFFHLPPRNGNGATVYGISCYRQIEAKALKVRQADITRETVQKSVCVLSKLPLYGLLQAKLQLITHAYFEEKDFSQISILKELYEHMNSSLGGASLEGSQVYLGLSPRDLVLHFRHKVLILFKLILLEKKVLFYISPVNRLVGALMTVLSLFPGMIEHGLSDCSQYRPRKSMSEDAGPQESNPSADDFTSESTSDVLNTSLETVTRVMAVNHGEDAVPKTEKPYFQVEGNNNKGQEPSDSGRYLELPPRPSPESSESDWETLDPSVLEDASLKEREQMGSDQTHLFQKDSLPSDSPPITVQPQANNRQVVLIPGLISGLEEDQYGMPLAIFTKGYLCLPYMALQQHHLLSDVTVRGFVAGATNILFRQQKHLSDAIVEVEEALIQIHDPELRKLLNPTTADLRFADYLVRHVTENRDDVFLDGTGWEGGDEWIRAQFAVYIHALLAATLQLDNEKMLSDYGTTFVAAWKNTHNYRVWNSNKHPALSEINPNHPFQGQYSVSDMKLRFSHSVQNSERGKKIGSVMVTTSRNVVQTGKAVGQSVGGAFSSAKTAMSSWLSTFTTSTPQSLPEPPNGKP</sequence>
<gene>
    <name type="primary">Avl9</name>
    <name type="synonym">Kiaa0241</name>
</gene>
<protein>
    <recommendedName>
        <fullName>Late secretory pathway protein AVL9 homolog</fullName>
    </recommendedName>
</protein>
<keyword id="KW-0967">Endosome</keyword>
<keyword id="KW-0472">Membrane</keyword>
<keyword id="KW-0488">Methylation</keyword>
<keyword id="KW-0597">Phosphoprotein</keyword>
<keyword id="KW-1185">Reference proteome</keyword>
<keyword id="KW-0812">Transmembrane</keyword>
<keyword id="KW-1133">Transmembrane helix</keyword>
<organism>
    <name type="scientific">Mus musculus</name>
    <name type="common">Mouse</name>
    <dbReference type="NCBI Taxonomy" id="10090"/>
    <lineage>
        <taxon>Eukaryota</taxon>
        <taxon>Metazoa</taxon>
        <taxon>Chordata</taxon>
        <taxon>Craniata</taxon>
        <taxon>Vertebrata</taxon>
        <taxon>Euteleostomi</taxon>
        <taxon>Mammalia</taxon>
        <taxon>Eutheria</taxon>
        <taxon>Euarchontoglires</taxon>
        <taxon>Glires</taxon>
        <taxon>Rodentia</taxon>
        <taxon>Myomorpha</taxon>
        <taxon>Muroidea</taxon>
        <taxon>Muridae</taxon>
        <taxon>Murinae</taxon>
        <taxon>Mus</taxon>
        <taxon>Mus</taxon>
    </lineage>
</organism>
<evidence type="ECO:0000250" key="1"/>
<evidence type="ECO:0000250" key="2">
    <source>
        <dbReference type="UniProtKB" id="Q8NBF6"/>
    </source>
</evidence>
<evidence type="ECO:0000255" key="3"/>
<evidence type="ECO:0000255" key="4">
    <source>
        <dbReference type="PROSITE-ProRule" id="PRU00304"/>
    </source>
</evidence>
<evidence type="ECO:0000256" key="5">
    <source>
        <dbReference type="SAM" id="MobiDB-lite"/>
    </source>
</evidence>
<evidence type="ECO:0000305" key="6"/>
<evidence type="ECO:0007744" key="7">
    <source>
    </source>
</evidence>
<feature type="chain" id="PRO_0000247179" description="Late secretory pathway protein AVL9 homolog">
    <location>
        <begin position="1"/>
        <end position="649"/>
    </location>
</feature>
<feature type="transmembrane region" description="Helical" evidence="3">
    <location>
        <begin position="204"/>
        <end position="229"/>
    </location>
</feature>
<feature type="domain" description="uDENN" evidence="4">
    <location>
        <begin position="17"/>
        <end position="161"/>
    </location>
</feature>
<feature type="domain" description="cDENN" evidence="4">
    <location>
        <begin position="173"/>
        <end position="341"/>
    </location>
</feature>
<feature type="domain" description="dDENN" evidence="4">
    <location>
        <begin position="343"/>
        <end position="594"/>
    </location>
</feature>
<feature type="region of interest" description="Disordered" evidence="5">
    <location>
        <begin position="239"/>
        <end position="267"/>
    </location>
</feature>
<feature type="region of interest" description="Disordered" evidence="5">
    <location>
        <begin position="283"/>
        <end position="336"/>
    </location>
</feature>
<feature type="region of interest" description="Disordered" evidence="5">
    <location>
        <begin position="348"/>
        <end position="377"/>
    </location>
</feature>
<feature type="compositionally biased region" description="Basic and acidic residues" evidence="5">
    <location>
        <begin position="285"/>
        <end position="295"/>
    </location>
</feature>
<feature type="compositionally biased region" description="Polar residues" evidence="5">
    <location>
        <begin position="301"/>
        <end position="311"/>
    </location>
</feature>
<feature type="compositionally biased region" description="Polar residues" evidence="5">
    <location>
        <begin position="352"/>
        <end position="377"/>
    </location>
</feature>
<feature type="modified residue" description="Phosphoserine" evidence="7">
    <location>
        <position position="244"/>
    </location>
</feature>
<feature type="modified residue" description="Omega-N-methylarginine" evidence="2">
    <location>
        <position position="589"/>
    </location>
</feature>
<accession>Q80U56</accession>
<accession>Q149B3</accession>
<reference key="1">
    <citation type="journal article" date="2003" name="DNA Res.">
        <title>Prediction of the coding sequences of mouse homologues of KIAA gene: II. The complete nucleotide sequences of 400 mouse KIAA-homologous cDNAs identified by screening of terminal sequences of cDNA clones randomly sampled from size-fractionated libraries.</title>
        <authorList>
            <person name="Okazaki N."/>
            <person name="Kikuno R."/>
            <person name="Ohara R."/>
            <person name="Inamoto S."/>
            <person name="Aizawa H."/>
            <person name="Yuasa S."/>
            <person name="Nakajima D."/>
            <person name="Nagase T."/>
            <person name="Ohara O."/>
            <person name="Koga H."/>
        </authorList>
    </citation>
    <scope>NUCLEOTIDE SEQUENCE [LARGE SCALE MRNA]</scope>
    <source>
        <tissue>Brain</tissue>
    </source>
</reference>
<reference key="2">
    <citation type="journal article" date="2004" name="Genome Res.">
        <title>The status, quality, and expansion of the NIH full-length cDNA project: the Mammalian Gene Collection (MGC).</title>
        <authorList>
            <consortium name="The MGC Project Team"/>
        </authorList>
    </citation>
    <scope>NUCLEOTIDE SEQUENCE [LARGE SCALE MRNA]</scope>
</reference>
<reference key="3">
    <citation type="journal article" date="2010" name="Cell">
        <title>A tissue-specific atlas of mouse protein phosphorylation and expression.</title>
        <authorList>
            <person name="Huttlin E.L."/>
            <person name="Jedrychowski M.P."/>
            <person name="Elias J.E."/>
            <person name="Goswami T."/>
            <person name="Rad R."/>
            <person name="Beausoleil S.A."/>
            <person name="Villen J."/>
            <person name="Haas W."/>
            <person name="Sowa M.E."/>
            <person name="Gygi S.P."/>
        </authorList>
    </citation>
    <scope>PHOSPHORYLATION [LARGE SCALE ANALYSIS] AT SER-244</scope>
    <scope>IDENTIFICATION BY MASS SPECTROMETRY [LARGE SCALE ANALYSIS]</scope>
    <source>
        <tissue>Brain</tissue>
        <tissue>Kidney</tissue>
        <tissue>Lung</tissue>
        <tissue>Pancreas</tissue>
        <tissue>Spleen</tissue>
        <tissue>Testis</tissue>
    </source>
</reference>
<proteinExistence type="evidence at protein level"/>
<dbReference type="EMBL" id="AK122228">
    <property type="protein sequence ID" value="BAC65510.1"/>
    <property type="status" value="ALT_INIT"/>
    <property type="molecule type" value="mRNA"/>
</dbReference>
<dbReference type="EMBL" id="BC117878">
    <property type="protein sequence ID" value="AAI17879.1"/>
    <property type="molecule type" value="mRNA"/>
</dbReference>
<dbReference type="CCDS" id="CCDS51789.1"/>
<dbReference type="RefSeq" id="NP_084511.1">
    <property type="nucleotide sequence ID" value="NM_030235.1"/>
</dbReference>
<dbReference type="FunCoup" id="Q80U56">
    <property type="interactions" value="2919"/>
</dbReference>
<dbReference type="STRING" id="10090.ENSMUSP00000031805"/>
<dbReference type="GlyGen" id="Q80U56">
    <property type="glycosylation" value="3 sites, 1 O-linked glycan (3 sites)"/>
</dbReference>
<dbReference type="iPTMnet" id="Q80U56"/>
<dbReference type="PhosphoSitePlus" id="Q80U56"/>
<dbReference type="SwissPalm" id="Q80U56"/>
<dbReference type="jPOST" id="Q80U56"/>
<dbReference type="PaxDb" id="10090-ENSMUSP00000031805"/>
<dbReference type="PeptideAtlas" id="Q80U56"/>
<dbReference type="ProteomicsDB" id="277139"/>
<dbReference type="Pumba" id="Q80U56"/>
<dbReference type="Antibodypedia" id="53032">
    <property type="antibodies" value="78 antibodies from 14 providers"/>
</dbReference>
<dbReference type="Ensembl" id="ENSMUST00000031805.11">
    <property type="protein sequence ID" value="ENSMUSP00000031805.9"/>
    <property type="gene ID" value="ENSMUSG00000029787.11"/>
</dbReference>
<dbReference type="GeneID" id="78937"/>
<dbReference type="KEGG" id="mmu:78937"/>
<dbReference type="UCSC" id="uc009cbl.2">
    <property type="organism name" value="mouse"/>
</dbReference>
<dbReference type="AGR" id="MGI:1926187"/>
<dbReference type="CTD" id="23080"/>
<dbReference type="MGI" id="MGI:1926187">
    <property type="gene designation" value="Avl9"/>
</dbReference>
<dbReference type="VEuPathDB" id="HostDB:ENSMUSG00000029787"/>
<dbReference type="eggNOG" id="KOG3823">
    <property type="taxonomic scope" value="Eukaryota"/>
</dbReference>
<dbReference type="GeneTree" id="ENSGT00390000010255"/>
<dbReference type="HOGENOM" id="CLU_009066_2_1_1"/>
<dbReference type="InParanoid" id="Q80U56"/>
<dbReference type="OMA" id="IRTQFRV"/>
<dbReference type="PhylomeDB" id="Q80U56"/>
<dbReference type="TreeFam" id="TF105998"/>
<dbReference type="BioGRID-ORCS" id="78937">
    <property type="hits" value="3 hits in 77 CRISPR screens"/>
</dbReference>
<dbReference type="ChiTaRS" id="Avl9">
    <property type="organism name" value="mouse"/>
</dbReference>
<dbReference type="PRO" id="PR:Q80U56"/>
<dbReference type="Proteomes" id="UP000000589">
    <property type="component" value="Chromosome 6"/>
</dbReference>
<dbReference type="RNAct" id="Q80U56">
    <property type="molecule type" value="protein"/>
</dbReference>
<dbReference type="Bgee" id="ENSMUSG00000029787">
    <property type="expression patterns" value="Expressed in metanephric cortical collecting duct and 245 other cell types or tissues"/>
</dbReference>
<dbReference type="ExpressionAtlas" id="Q80U56">
    <property type="expression patterns" value="baseline and differential"/>
</dbReference>
<dbReference type="GO" id="GO:0016020">
    <property type="term" value="C:membrane"/>
    <property type="evidence" value="ECO:0007669"/>
    <property type="project" value="UniProtKB-SubCell"/>
</dbReference>
<dbReference type="GO" id="GO:0055037">
    <property type="term" value="C:recycling endosome"/>
    <property type="evidence" value="ECO:0000250"/>
    <property type="project" value="UniProtKB"/>
</dbReference>
<dbReference type="GO" id="GO:0016477">
    <property type="term" value="P:cell migration"/>
    <property type="evidence" value="ECO:0000250"/>
    <property type="project" value="UniProtKB"/>
</dbReference>
<dbReference type="InterPro" id="IPR018307">
    <property type="entry name" value="ABL9/DENND6_dom"/>
</dbReference>
<dbReference type="InterPro" id="IPR051731">
    <property type="entry name" value="DENND11/AVL9_GEFs"/>
</dbReference>
<dbReference type="InterPro" id="IPR037516">
    <property type="entry name" value="Tripartite_DENN"/>
</dbReference>
<dbReference type="PANTHER" id="PTHR31017:SF1">
    <property type="entry name" value="LATE SECRETORY PATHWAY PROTEIN AVL9 HOMOLOG"/>
    <property type="match status" value="1"/>
</dbReference>
<dbReference type="PANTHER" id="PTHR31017">
    <property type="entry name" value="LATE SECRETORY PATHWAY PROTEIN AVL9-RELATED"/>
    <property type="match status" value="1"/>
</dbReference>
<dbReference type="Pfam" id="PF09794">
    <property type="entry name" value="Avl9"/>
    <property type="match status" value="1"/>
</dbReference>
<dbReference type="PROSITE" id="PS50211">
    <property type="entry name" value="DENN"/>
    <property type="match status" value="1"/>
</dbReference>
<comment type="function">
    <text evidence="1">Functions in cell migration.</text>
</comment>
<comment type="subcellular location">
    <subcellularLocation>
        <location evidence="1">Recycling endosome</location>
    </subcellularLocation>
    <subcellularLocation>
        <location evidence="6">Membrane</location>
        <topology evidence="6">Single-pass membrane protein</topology>
    </subcellularLocation>
</comment>
<comment type="similarity">
    <text evidence="6">Belongs to the AVL9 family.</text>
</comment>
<comment type="sequence caution" evidence="6">
    <conflict type="erroneous initiation">
        <sequence resource="EMBL-CDS" id="BAC65510"/>
    </conflict>
</comment>